<name>LEU3_BURTA</name>
<feature type="chain" id="PRO_0000250109" description="3-isopropylmalate dehydrogenase">
    <location>
        <begin position="1"/>
        <end position="355"/>
    </location>
</feature>
<feature type="binding site" evidence="1">
    <location>
        <position position="90"/>
    </location>
    <ligand>
        <name>substrate</name>
    </ligand>
</feature>
<feature type="binding site" evidence="1">
    <location>
        <position position="100"/>
    </location>
    <ligand>
        <name>substrate</name>
    </ligand>
</feature>
<feature type="binding site" evidence="1">
    <location>
        <position position="128"/>
    </location>
    <ligand>
        <name>substrate</name>
    </ligand>
</feature>
<feature type="binding site" evidence="1">
    <location>
        <position position="222"/>
    </location>
    <ligand>
        <name>Mg(2+)</name>
        <dbReference type="ChEBI" id="CHEBI:18420"/>
    </ligand>
</feature>
<feature type="binding site" evidence="1">
    <location>
        <position position="222"/>
    </location>
    <ligand>
        <name>substrate</name>
    </ligand>
</feature>
<feature type="binding site" evidence="1">
    <location>
        <position position="246"/>
    </location>
    <ligand>
        <name>Mg(2+)</name>
        <dbReference type="ChEBI" id="CHEBI:18420"/>
    </ligand>
</feature>
<feature type="binding site" evidence="1">
    <location>
        <position position="250"/>
    </location>
    <ligand>
        <name>Mg(2+)</name>
        <dbReference type="ChEBI" id="CHEBI:18420"/>
    </ligand>
</feature>
<feature type="binding site" evidence="1">
    <location>
        <begin position="280"/>
        <end position="292"/>
    </location>
    <ligand>
        <name>NAD(+)</name>
        <dbReference type="ChEBI" id="CHEBI:57540"/>
    </ligand>
</feature>
<feature type="site" description="Important for catalysis" evidence="1">
    <location>
        <position position="135"/>
    </location>
</feature>
<feature type="site" description="Important for catalysis" evidence="1">
    <location>
        <position position="190"/>
    </location>
</feature>
<feature type="strand" evidence="3">
    <location>
        <begin position="2"/>
        <end position="9"/>
    </location>
</feature>
<feature type="helix" evidence="3">
    <location>
        <begin position="11"/>
        <end position="25"/>
    </location>
</feature>
<feature type="strand" evidence="2">
    <location>
        <begin position="26"/>
        <end position="28"/>
    </location>
</feature>
<feature type="strand" evidence="3">
    <location>
        <begin position="31"/>
        <end position="34"/>
    </location>
</feature>
<feature type="helix" evidence="3">
    <location>
        <begin position="39"/>
        <end position="45"/>
    </location>
</feature>
<feature type="strand" evidence="3">
    <location>
        <begin position="46"/>
        <end position="49"/>
    </location>
</feature>
<feature type="helix" evidence="3">
    <location>
        <begin position="51"/>
        <end position="59"/>
    </location>
</feature>
<feature type="strand" evidence="3">
    <location>
        <begin position="60"/>
        <end position="67"/>
    </location>
</feature>
<feature type="helix" evidence="3">
    <location>
        <begin position="71"/>
        <end position="73"/>
    </location>
</feature>
<feature type="helix" evidence="3">
    <location>
        <begin position="78"/>
        <end position="80"/>
    </location>
</feature>
<feature type="helix" evidence="3">
    <location>
        <begin position="84"/>
        <end position="92"/>
    </location>
</feature>
<feature type="strand" evidence="3">
    <location>
        <begin position="97"/>
        <end position="103"/>
    </location>
</feature>
<feature type="helix" evidence="3">
    <location>
        <begin position="106"/>
        <end position="111"/>
    </location>
</feature>
<feature type="strand" evidence="3">
    <location>
        <begin position="112"/>
        <end position="114"/>
    </location>
</feature>
<feature type="helix" evidence="3">
    <location>
        <begin position="116"/>
        <end position="119"/>
    </location>
</feature>
<feature type="strand" evidence="3">
    <location>
        <begin position="123"/>
        <end position="129"/>
    </location>
</feature>
<feature type="turn" evidence="3">
    <location>
        <begin position="134"/>
        <end position="136"/>
    </location>
</feature>
<feature type="strand" evidence="3">
    <location>
        <begin position="141"/>
        <end position="144"/>
    </location>
</feature>
<feature type="turn" evidence="3">
    <location>
        <begin position="149"/>
        <end position="152"/>
    </location>
</feature>
<feature type="strand" evidence="3">
    <location>
        <begin position="153"/>
        <end position="163"/>
    </location>
</feature>
<feature type="helix" evidence="3">
    <location>
        <begin position="164"/>
        <end position="179"/>
    </location>
</feature>
<feature type="turn" evidence="3">
    <location>
        <begin position="180"/>
        <end position="182"/>
    </location>
</feature>
<feature type="strand" evidence="3">
    <location>
        <begin position="183"/>
        <end position="189"/>
    </location>
</feature>
<feature type="turn" evidence="3">
    <location>
        <begin position="191"/>
        <end position="193"/>
    </location>
</feature>
<feature type="helix" evidence="3">
    <location>
        <begin position="195"/>
        <end position="208"/>
    </location>
</feature>
<feature type="strand" evidence="3">
    <location>
        <begin position="214"/>
        <end position="220"/>
    </location>
</feature>
<feature type="helix" evidence="3">
    <location>
        <begin position="221"/>
        <end position="230"/>
    </location>
</feature>
<feature type="helix" evidence="3">
    <location>
        <begin position="232"/>
        <end position="234"/>
    </location>
</feature>
<feature type="strand" evidence="3">
    <location>
        <begin position="236"/>
        <end position="240"/>
    </location>
</feature>
<feature type="helix" evidence="3">
    <location>
        <begin position="242"/>
        <end position="256"/>
    </location>
</feature>
<feature type="helix" evidence="3">
    <location>
        <begin position="259"/>
        <end position="261"/>
    </location>
</feature>
<feature type="strand" evidence="3">
    <location>
        <begin position="263"/>
        <end position="267"/>
    </location>
</feature>
<feature type="strand" evidence="3">
    <location>
        <begin position="273"/>
        <end position="277"/>
    </location>
</feature>
<feature type="turn" evidence="3">
    <location>
        <begin position="283"/>
        <end position="287"/>
    </location>
</feature>
<feature type="helix" evidence="3">
    <location>
        <begin position="294"/>
        <end position="306"/>
    </location>
</feature>
<feature type="helix" evidence="3">
    <location>
        <begin position="311"/>
        <end position="326"/>
    </location>
</feature>
<feature type="helix" evidence="3">
    <location>
        <begin position="332"/>
        <end position="334"/>
    </location>
</feature>
<feature type="helix" evidence="3">
    <location>
        <begin position="344"/>
        <end position="353"/>
    </location>
</feature>
<keyword id="KW-0002">3D-structure</keyword>
<keyword id="KW-0028">Amino-acid biosynthesis</keyword>
<keyword id="KW-0100">Branched-chain amino acid biosynthesis</keyword>
<keyword id="KW-0963">Cytoplasm</keyword>
<keyword id="KW-0432">Leucine biosynthesis</keyword>
<keyword id="KW-0460">Magnesium</keyword>
<keyword id="KW-0464">Manganese</keyword>
<keyword id="KW-0479">Metal-binding</keyword>
<keyword id="KW-0520">NAD</keyword>
<keyword id="KW-0560">Oxidoreductase</keyword>
<protein>
    <recommendedName>
        <fullName evidence="1">3-isopropylmalate dehydrogenase</fullName>
        <ecNumber evidence="1">1.1.1.85</ecNumber>
    </recommendedName>
    <alternativeName>
        <fullName evidence="1">3-IPM-DH</fullName>
    </alternativeName>
    <alternativeName>
        <fullName evidence="1">Beta-IPM dehydrogenase</fullName>
        <shortName evidence="1">IMDH</shortName>
    </alternativeName>
</protein>
<organism>
    <name type="scientific">Burkholderia thailandensis (strain ATCC 700388 / DSM 13276 / CCUG 48851 / CIP 106301 / E264)</name>
    <dbReference type="NCBI Taxonomy" id="271848"/>
    <lineage>
        <taxon>Bacteria</taxon>
        <taxon>Pseudomonadati</taxon>
        <taxon>Pseudomonadota</taxon>
        <taxon>Betaproteobacteria</taxon>
        <taxon>Burkholderiales</taxon>
        <taxon>Burkholderiaceae</taxon>
        <taxon>Burkholderia</taxon>
        <taxon>pseudomallei group</taxon>
    </lineage>
</organism>
<reference key="1">
    <citation type="journal article" date="2005" name="BMC Genomics">
        <title>Bacterial genome adaptation to niches: divergence of the potential virulence genes in three Burkholderia species of different survival strategies.</title>
        <authorList>
            <person name="Kim H.S."/>
            <person name="Schell M.A."/>
            <person name="Yu Y."/>
            <person name="Ulrich R.L."/>
            <person name="Sarria S.H."/>
            <person name="Nierman W.C."/>
            <person name="DeShazer D."/>
        </authorList>
    </citation>
    <scope>NUCLEOTIDE SEQUENCE [LARGE SCALE GENOMIC DNA]</scope>
    <source>
        <strain>ATCC 700388 / DSM 13276 / CCUG 48851 / CIP 106301 / E264</strain>
    </source>
</reference>
<comment type="function">
    <text evidence="1">Catalyzes the oxidation of 3-carboxy-2-hydroxy-4-methylpentanoate (3-isopropylmalate) to 3-carboxy-4-methyl-2-oxopentanoate. The product decarboxylates to 4-methyl-2 oxopentanoate.</text>
</comment>
<comment type="catalytic activity">
    <reaction evidence="1">
        <text>(2R,3S)-3-isopropylmalate + NAD(+) = 4-methyl-2-oxopentanoate + CO2 + NADH</text>
        <dbReference type="Rhea" id="RHEA:32271"/>
        <dbReference type="ChEBI" id="CHEBI:16526"/>
        <dbReference type="ChEBI" id="CHEBI:17865"/>
        <dbReference type="ChEBI" id="CHEBI:35121"/>
        <dbReference type="ChEBI" id="CHEBI:57540"/>
        <dbReference type="ChEBI" id="CHEBI:57945"/>
        <dbReference type="EC" id="1.1.1.85"/>
    </reaction>
</comment>
<comment type="cofactor">
    <cofactor evidence="1">
        <name>Mg(2+)</name>
        <dbReference type="ChEBI" id="CHEBI:18420"/>
    </cofactor>
    <cofactor evidence="1">
        <name>Mn(2+)</name>
        <dbReference type="ChEBI" id="CHEBI:29035"/>
    </cofactor>
    <text evidence="1">Binds 1 Mg(2+) or Mn(2+) ion per subunit.</text>
</comment>
<comment type="pathway">
    <text evidence="1">Amino-acid biosynthesis; L-leucine biosynthesis; L-leucine from 3-methyl-2-oxobutanoate: step 3/4.</text>
</comment>
<comment type="subunit">
    <text evidence="1">Homodimer.</text>
</comment>
<comment type="subcellular location">
    <subcellularLocation>
        <location evidence="1">Cytoplasm</location>
    </subcellularLocation>
</comment>
<comment type="similarity">
    <text evidence="1">Belongs to the isocitrate and isopropylmalate dehydrogenases family. LeuB type 1 subfamily.</text>
</comment>
<evidence type="ECO:0000255" key="1">
    <source>
        <dbReference type="HAMAP-Rule" id="MF_01033"/>
    </source>
</evidence>
<evidence type="ECO:0007829" key="2">
    <source>
        <dbReference type="PDB" id="4IWH"/>
    </source>
</evidence>
<evidence type="ECO:0007829" key="3">
    <source>
        <dbReference type="PDB" id="4XXV"/>
    </source>
</evidence>
<sequence>MKIAVLPGDGIGPEIVNEAVKVLNALDEKFELEHAPVGGAGYEASGHPLPDATLALAKEADAILFGAVGDWKYDSLERALRPEQAILGLRKHLELFANFRPAICYPQLVDASPLKPELVAGLDILIVRELNGDIYFGQPRGVRAAPDGPFAGEREGFDTMRYSEPEVRRIAHVAFQAAQKRAKKLLSVDKSNVLETSQFWRDVMIDVSKEYADVELSHMYVDNAAMQLAKAPKQFDVIVTGNMFGDILSDEASMLTGSIGMLPSASLDKNNKGLYEPSHGSAPDIAGKGIANPLATILSAAMLLRYSLNRAEQADRIERAVKTVLEQGYRTGDIATPGCRQVGTAAMGDAVVAAL</sequence>
<accession>Q2T7H6</accession>
<dbReference type="EC" id="1.1.1.85" evidence="1"/>
<dbReference type="EMBL" id="CP000085">
    <property type="protein sequence ID" value="ABC35976.1"/>
    <property type="molecule type" value="Genomic_DNA"/>
</dbReference>
<dbReference type="RefSeq" id="WP_009895843.1">
    <property type="nucleotide sequence ID" value="NZ_CP008786.1"/>
</dbReference>
<dbReference type="PDB" id="4IWH">
    <property type="method" value="X-ray"/>
    <property type="resolution" value="1.75 A"/>
    <property type="chains" value="A/B=1-355"/>
</dbReference>
<dbReference type="PDB" id="4XXV">
    <property type="method" value="X-ray"/>
    <property type="resolution" value="1.70 A"/>
    <property type="chains" value="A/B=1-355"/>
</dbReference>
<dbReference type="PDBsum" id="4IWH"/>
<dbReference type="PDBsum" id="4XXV"/>
<dbReference type="SMR" id="Q2T7H6"/>
<dbReference type="GeneID" id="45118162"/>
<dbReference type="KEGG" id="bte:BTH_II0674"/>
<dbReference type="HOGENOM" id="CLU_031953_0_3_4"/>
<dbReference type="UniPathway" id="UPA00048">
    <property type="reaction ID" value="UER00072"/>
</dbReference>
<dbReference type="EvolutionaryTrace" id="Q2T7H6"/>
<dbReference type="Proteomes" id="UP000001930">
    <property type="component" value="Chromosome II"/>
</dbReference>
<dbReference type="GO" id="GO:0005829">
    <property type="term" value="C:cytosol"/>
    <property type="evidence" value="ECO:0007669"/>
    <property type="project" value="TreeGrafter"/>
</dbReference>
<dbReference type="GO" id="GO:0003862">
    <property type="term" value="F:3-isopropylmalate dehydrogenase activity"/>
    <property type="evidence" value="ECO:0007669"/>
    <property type="project" value="UniProtKB-UniRule"/>
</dbReference>
<dbReference type="GO" id="GO:0000287">
    <property type="term" value="F:magnesium ion binding"/>
    <property type="evidence" value="ECO:0007669"/>
    <property type="project" value="InterPro"/>
</dbReference>
<dbReference type="GO" id="GO:0051287">
    <property type="term" value="F:NAD binding"/>
    <property type="evidence" value="ECO:0007669"/>
    <property type="project" value="InterPro"/>
</dbReference>
<dbReference type="GO" id="GO:0009098">
    <property type="term" value="P:L-leucine biosynthetic process"/>
    <property type="evidence" value="ECO:0007669"/>
    <property type="project" value="UniProtKB-UniRule"/>
</dbReference>
<dbReference type="FunFam" id="3.40.718.10:FF:000028">
    <property type="entry name" value="3-isopropylmalate dehydrogenase"/>
    <property type="match status" value="1"/>
</dbReference>
<dbReference type="Gene3D" id="3.40.718.10">
    <property type="entry name" value="Isopropylmalate Dehydrogenase"/>
    <property type="match status" value="1"/>
</dbReference>
<dbReference type="HAMAP" id="MF_01033">
    <property type="entry name" value="LeuB_type1"/>
    <property type="match status" value="1"/>
</dbReference>
<dbReference type="InterPro" id="IPR019818">
    <property type="entry name" value="IsoCit/isopropylmalate_DH_CS"/>
</dbReference>
<dbReference type="InterPro" id="IPR024084">
    <property type="entry name" value="IsoPropMal-DH-like_dom"/>
</dbReference>
<dbReference type="InterPro" id="IPR004429">
    <property type="entry name" value="Isopropylmalate_DH"/>
</dbReference>
<dbReference type="NCBIfam" id="TIGR00169">
    <property type="entry name" value="leuB"/>
    <property type="match status" value="1"/>
</dbReference>
<dbReference type="PANTHER" id="PTHR42979">
    <property type="entry name" value="3-ISOPROPYLMALATE DEHYDROGENASE"/>
    <property type="match status" value="1"/>
</dbReference>
<dbReference type="PANTHER" id="PTHR42979:SF1">
    <property type="entry name" value="3-ISOPROPYLMALATE DEHYDROGENASE"/>
    <property type="match status" value="1"/>
</dbReference>
<dbReference type="Pfam" id="PF00180">
    <property type="entry name" value="Iso_dh"/>
    <property type="match status" value="1"/>
</dbReference>
<dbReference type="SMART" id="SM01329">
    <property type="entry name" value="Iso_dh"/>
    <property type="match status" value="1"/>
</dbReference>
<dbReference type="SUPFAM" id="SSF53659">
    <property type="entry name" value="Isocitrate/Isopropylmalate dehydrogenase-like"/>
    <property type="match status" value="1"/>
</dbReference>
<dbReference type="PROSITE" id="PS00470">
    <property type="entry name" value="IDH_IMDH"/>
    <property type="match status" value="1"/>
</dbReference>
<gene>
    <name evidence="1" type="primary">leuB</name>
    <name type="ordered locus">BTH_II0674</name>
</gene>
<proteinExistence type="evidence at protein level"/>